<protein>
    <recommendedName>
        <fullName>GDP-mannose pyrophosphatase</fullName>
        <ecNumber evidence="1">3.6.1.-</ecNumber>
    </recommendedName>
    <alternativeName>
        <fullName>GDP-mannose hydrolase</fullName>
    </alternativeName>
    <alternativeName>
        <fullName>GDPMK</fullName>
    </alternativeName>
</protein>
<gene>
    <name type="primary">nudK</name>
    <name type="ordered locus">Z3723</name>
    <name type="ordered locus">ECs3329</name>
</gene>
<dbReference type="EC" id="3.6.1.-" evidence="1"/>
<dbReference type="EMBL" id="AE005174">
    <property type="protein sequence ID" value="AAG57576.1"/>
    <property type="molecule type" value="Genomic_DNA"/>
</dbReference>
<dbReference type="EMBL" id="BA000007">
    <property type="protein sequence ID" value="BAB36752.1"/>
    <property type="molecule type" value="Genomic_DNA"/>
</dbReference>
<dbReference type="PIR" id="A91045">
    <property type="entry name" value="A91045"/>
</dbReference>
<dbReference type="PIR" id="D85889">
    <property type="entry name" value="D85889"/>
</dbReference>
<dbReference type="RefSeq" id="NP_311356.1">
    <property type="nucleotide sequence ID" value="NC_002695.1"/>
</dbReference>
<dbReference type="RefSeq" id="WP_001301627.1">
    <property type="nucleotide sequence ID" value="NZ_VOAI01000001.1"/>
</dbReference>
<dbReference type="SMR" id="Q8XBE7"/>
<dbReference type="STRING" id="155864.Z3723"/>
<dbReference type="GeneID" id="917127"/>
<dbReference type="KEGG" id="ece:Z3723"/>
<dbReference type="KEGG" id="ecs:ECs_3329"/>
<dbReference type="PATRIC" id="fig|386585.9.peg.3476"/>
<dbReference type="eggNOG" id="COG0494">
    <property type="taxonomic scope" value="Bacteria"/>
</dbReference>
<dbReference type="HOGENOM" id="CLU_062658_6_0_6"/>
<dbReference type="OMA" id="EQCIRNE"/>
<dbReference type="Proteomes" id="UP000000558">
    <property type="component" value="Chromosome"/>
</dbReference>
<dbReference type="Proteomes" id="UP000002519">
    <property type="component" value="Chromosome"/>
</dbReference>
<dbReference type="GO" id="GO:0005829">
    <property type="term" value="C:cytosol"/>
    <property type="evidence" value="ECO:0007669"/>
    <property type="project" value="TreeGrafter"/>
</dbReference>
<dbReference type="GO" id="GO:0016818">
    <property type="term" value="F:hydrolase activity, acting on acid anhydrides, in phosphorus-containing anhydrides"/>
    <property type="evidence" value="ECO:0007669"/>
    <property type="project" value="InterPro"/>
</dbReference>
<dbReference type="GO" id="GO:0046872">
    <property type="term" value="F:metal ion binding"/>
    <property type="evidence" value="ECO:0007669"/>
    <property type="project" value="UniProtKB-KW"/>
</dbReference>
<dbReference type="GO" id="GO:0006753">
    <property type="term" value="P:nucleoside phosphate metabolic process"/>
    <property type="evidence" value="ECO:0007669"/>
    <property type="project" value="TreeGrafter"/>
</dbReference>
<dbReference type="GO" id="GO:0019693">
    <property type="term" value="P:ribose phosphate metabolic process"/>
    <property type="evidence" value="ECO:0007669"/>
    <property type="project" value="TreeGrafter"/>
</dbReference>
<dbReference type="CDD" id="cd24157">
    <property type="entry name" value="NUDIX_GDPMK"/>
    <property type="match status" value="1"/>
</dbReference>
<dbReference type="FunFam" id="3.90.79.10:FF:000010">
    <property type="entry name" value="GDP-mannose pyrophosphatase NudK"/>
    <property type="match status" value="1"/>
</dbReference>
<dbReference type="Gene3D" id="3.90.79.10">
    <property type="entry name" value="Nucleoside Triphosphate Pyrophosphohydrolase"/>
    <property type="match status" value="1"/>
</dbReference>
<dbReference type="InterPro" id="IPR004385">
    <property type="entry name" value="NDP_pyrophosphatase"/>
</dbReference>
<dbReference type="InterPro" id="IPR015797">
    <property type="entry name" value="NUDIX_hydrolase-like_dom_sf"/>
</dbReference>
<dbReference type="InterPro" id="IPR000086">
    <property type="entry name" value="NUDIX_hydrolase_dom"/>
</dbReference>
<dbReference type="NCBIfam" id="TIGR00052">
    <property type="entry name" value="nudix-type nucleoside diphosphatase, YffH/AdpP family"/>
    <property type="match status" value="1"/>
</dbReference>
<dbReference type="NCBIfam" id="NF011585">
    <property type="entry name" value="PRK15009.1"/>
    <property type="match status" value="1"/>
</dbReference>
<dbReference type="PANTHER" id="PTHR11839:SF18">
    <property type="entry name" value="NUDIX HYDROLASE DOMAIN-CONTAINING PROTEIN"/>
    <property type="match status" value="1"/>
</dbReference>
<dbReference type="PANTHER" id="PTHR11839">
    <property type="entry name" value="UDP/ADP-SUGAR PYROPHOSPHATASE"/>
    <property type="match status" value="1"/>
</dbReference>
<dbReference type="Pfam" id="PF00293">
    <property type="entry name" value="NUDIX"/>
    <property type="match status" value="1"/>
</dbReference>
<dbReference type="SUPFAM" id="SSF55811">
    <property type="entry name" value="Nudix"/>
    <property type="match status" value="1"/>
</dbReference>
<dbReference type="PROSITE" id="PS51462">
    <property type="entry name" value="NUDIX"/>
    <property type="match status" value="1"/>
</dbReference>
<feature type="chain" id="PRO_0000342487" description="GDP-mannose pyrophosphatase">
    <location>
        <begin position="1"/>
        <end position="191"/>
    </location>
</feature>
<feature type="domain" description="Nudix hydrolase" evidence="2">
    <location>
        <begin position="43"/>
        <end position="180"/>
    </location>
</feature>
<feature type="short sequence motif" description="Nudix box">
    <location>
        <begin position="86"/>
        <end position="106"/>
    </location>
</feature>
<feature type="binding site" description="in other chain" evidence="1">
    <location>
        <position position="17"/>
    </location>
    <ligand>
        <name>GDP-alpha-D-mannose</name>
        <dbReference type="ChEBI" id="CHEBI:57527"/>
        <note>ligand shared between dimeric partners</note>
    </ligand>
</feature>
<feature type="binding site" evidence="1">
    <location>
        <begin position="38"/>
        <end position="40"/>
    </location>
    <ligand>
        <name>GDP-alpha-D-mannose</name>
        <dbReference type="ChEBI" id="CHEBI:57527"/>
        <note>ligand shared between dimeric partners</note>
    </ligand>
</feature>
<feature type="binding site" description="in other chain" evidence="1">
    <location>
        <position position="67"/>
    </location>
    <ligand>
        <name>GDP-alpha-D-mannose</name>
        <dbReference type="ChEBI" id="CHEBI:57527"/>
        <note>ligand shared between dimeric partners</note>
    </ligand>
</feature>
<feature type="binding site" description="in other chain" evidence="1">
    <location>
        <begin position="85"/>
        <end position="87"/>
    </location>
    <ligand>
        <name>GDP-alpha-D-mannose</name>
        <dbReference type="ChEBI" id="CHEBI:57527"/>
        <note>ligand shared between dimeric partners</note>
    </ligand>
</feature>
<feature type="binding site" evidence="1">
    <location>
        <position position="85"/>
    </location>
    <ligand>
        <name>Mg(2+)</name>
        <dbReference type="ChEBI" id="CHEBI:18420"/>
        <label>1</label>
    </ligand>
</feature>
<feature type="binding site" evidence="1">
    <location>
        <position position="100"/>
    </location>
    <ligand>
        <name>Mg(2+)</name>
        <dbReference type="ChEBI" id="CHEBI:18420"/>
        <label>2</label>
    </ligand>
</feature>
<feature type="binding site" description="in other chain" evidence="1">
    <location>
        <position position="104"/>
    </location>
    <ligand>
        <name>GDP-alpha-D-mannose</name>
        <dbReference type="ChEBI" id="CHEBI:57527"/>
        <note>ligand shared between dimeric partners</note>
    </ligand>
</feature>
<feature type="binding site" evidence="1">
    <location>
        <position position="104"/>
    </location>
    <ligand>
        <name>Mg(2+)</name>
        <dbReference type="ChEBI" id="CHEBI:18420"/>
        <label>1</label>
    </ligand>
</feature>
<feature type="binding site" evidence="1">
    <location>
        <position position="104"/>
    </location>
    <ligand>
        <name>Mg(2+)</name>
        <dbReference type="ChEBI" id="CHEBI:18420"/>
        <label>2</label>
    </ligand>
</feature>
<feature type="binding site" description="in other chain" evidence="1">
    <location>
        <position position="127"/>
    </location>
    <ligand>
        <name>GDP-alpha-D-mannose</name>
        <dbReference type="ChEBI" id="CHEBI:57527"/>
        <note>ligand shared between dimeric partners</note>
    </ligand>
</feature>
<feature type="binding site" description="in other chain" evidence="1">
    <location>
        <begin position="150"/>
        <end position="151"/>
    </location>
    <ligand>
        <name>GDP-alpha-D-mannose</name>
        <dbReference type="ChEBI" id="CHEBI:57527"/>
        <note>ligand shared between dimeric partners</note>
    </ligand>
</feature>
<feature type="binding site" evidence="1">
    <location>
        <position position="151"/>
    </location>
    <ligand>
        <name>Mg(2+)</name>
        <dbReference type="ChEBI" id="CHEBI:18420"/>
        <label>2</label>
    </ligand>
</feature>
<feature type="binding site" description="in other chain" evidence="1">
    <location>
        <position position="176"/>
    </location>
    <ligand>
        <name>GDP-alpha-D-mannose</name>
        <dbReference type="ChEBI" id="CHEBI:57527"/>
        <note>ligand shared between dimeric partners</note>
    </ligand>
</feature>
<proteinExistence type="inferred from homology"/>
<keyword id="KW-0378">Hydrolase</keyword>
<keyword id="KW-0460">Magnesium</keyword>
<keyword id="KW-0479">Metal-binding</keyword>
<keyword id="KW-1185">Reference proteome</keyword>
<accession>Q8XBE7</accession>
<accession>Q7ABQ4</accession>
<name>NUDK_ECO57</name>
<reference key="1">
    <citation type="journal article" date="2001" name="Nature">
        <title>Genome sequence of enterohaemorrhagic Escherichia coli O157:H7.</title>
        <authorList>
            <person name="Perna N.T."/>
            <person name="Plunkett G. III"/>
            <person name="Burland V."/>
            <person name="Mau B."/>
            <person name="Glasner J.D."/>
            <person name="Rose D.J."/>
            <person name="Mayhew G.F."/>
            <person name="Evans P.S."/>
            <person name="Gregor J."/>
            <person name="Kirkpatrick H.A."/>
            <person name="Posfai G."/>
            <person name="Hackett J."/>
            <person name="Klink S."/>
            <person name="Boutin A."/>
            <person name="Shao Y."/>
            <person name="Miller L."/>
            <person name="Grotbeck E.J."/>
            <person name="Davis N.W."/>
            <person name="Lim A."/>
            <person name="Dimalanta E.T."/>
            <person name="Potamousis K."/>
            <person name="Apodaca J."/>
            <person name="Anantharaman T.S."/>
            <person name="Lin J."/>
            <person name="Yen G."/>
            <person name="Schwartz D.C."/>
            <person name="Welch R.A."/>
            <person name="Blattner F.R."/>
        </authorList>
    </citation>
    <scope>NUCLEOTIDE SEQUENCE [LARGE SCALE GENOMIC DNA]</scope>
    <source>
        <strain>O157:H7 / EDL933 / ATCC 700927 / EHEC</strain>
    </source>
</reference>
<reference key="2">
    <citation type="journal article" date="2001" name="DNA Res.">
        <title>Complete genome sequence of enterohemorrhagic Escherichia coli O157:H7 and genomic comparison with a laboratory strain K-12.</title>
        <authorList>
            <person name="Hayashi T."/>
            <person name="Makino K."/>
            <person name="Ohnishi M."/>
            <person name="Kurokawa K."/>
            <person name="Ishii K."/>
            <person name="Yokoyama K."/>
            <person name="Han C.-G."/>
            <person name="Ohtsubo E."/>
            <person name="Nakayama K."/>
            <person name="Murata T."/>
            <person name="Tanaka M."/>
            <person name="Tobe T."/>
            <person name="Iida T."/>
            <person name="Takami H."/>
            <person name="Honda T."/>
            <person name="Sasakawa C."/>
            <person name="Ogasawara N."/>
            <person name="Yasunaga T."/>
            <person name="Kuhara S."/>
            <person name="Shiba T."/>
            <person name="Hattori M."/>
            <person name="Shinagawa H."/>
        </authorList>
    </citation>
    <scope>NUCLEOTIDE SEQUENCE [LARGE SCALE GENOMIC DNA]</scope>
    <source>
        <strain>O157:H7 / Sakai / RIMD 0509952 / EHEC</strain>
    </source>
</reference>
<organism>
    <name type="scientific">Escherichia coli O157:H7</name>
    <dbReference type="NCBI Taxonomy" id="83334"/>
    <lineage>
        <taxon>Bacteria</taxon>
        <taxon>Pseudomonadati</taxon>
        <taxon>Pseudomonadota</taxon>
        <taxon>Gammaproteobacteria</taxon>
        <taxon>Enterobacterales</taxon>
        <taxon>Enterobacteriaceae</taxon>
        <taxon>Escherichia</taxon>
    </lineage>
</organism>
<sequence length="191" mass="21745">MTQQITLIKDKILSDNYFTLHNITYDLTRKDGEVIRHKREVYDRGNGATILLYNAKKKTVVLIRQFRVATWVNGNESGQLIETCAGLLDNDEPEVCIRKEAIEETGYEVGEVRKLFELYMSPGGVTELIHFFIAEYSDNQRANAGGGVEDEDIEVLELPFSQALEMIKTGEIRDGKTVLLLNYLQMSHLID</sequence>
<comment type="function">
    <text evidence="1">Nucleoside diphosphate sugar hydrolase that hydrolyzes GDP-mannose as its preferred substrate, yielding GMP and mannose-1-phosphate.</text>
</comment>
<comment type="catalytic activity">
    <reaction evidence="1">
        <text>GDP-alpha-D-mannose + H2O = alpha-D-mannose 1-phosphate + GMP + 2 H(+)</text>
        <dbReference type="Rhea" id="RHEA:27978"/>
        <dbReference type="ChEBI" id="CHEBI:15377"/>
        <dbReference type="ChEBI" id="CHEBI:15378"/>
        <dbReference type="ChEBI" id="CHEBI:57527"/>
        <dbReference type="ChEBI" id="CHEBI:58115"/>
        <dbReference type="ChEBI" id="CHEBI:58409"/>
    </reaction>
</comment>
<comment type="cofactor">
    <cofactor evidence="1">
        <name>Mg(2+)</name>
        <dbReference type="ChEBI" id="CHEBI:18420"/>
    </cofactor>
</comment>
<comment type="subunit">
    <text evidence="1">Homodimer.</text>
</comment>
<comment type="domain">
    <text evidence="1">In the dimer, the N-terminal domains are swapped between the two monomers, such that residues of both chains contribute to the active site.</text>
</comment>
<comment type="similarity">
    <text evidence="3">Belongs to the Nudix hydrolase family. NudK subfamily.</text>
</comment>
<evidence type="ECO:0000250" key="1">
    <source>
        <dbReference type="UniProtKB" id="P37128"/>
    </source>
</evidence>
<evidence type="ECO:0000255" key="2">
    <source>
        <dbReference type="PROSITE-ProRule" id="PRU00794"/>
    </source>
</evidence>
<evidence type="ECO:0000305" key="3"/>